<sequence>MSMSHLYGKDEDSDGVEMENFEITDWDLQNEFNPNRRKHFQTKEEATYGMWAEHDSDDERPSFGGKRSRDYSAPVNFISAGIRKPAAEEKSDSDSDSETQSRRENFPKDFEAKKLRTGGNFKPSQRTFAGGIKSNTDFGSWERHTKGIGQKLLQKMGYMPGRGLGKNAQGIIAPIEAKQRRGKGAVGAYGSERTKQSIKDFPVVDSEEEEEKDFQKEMSQWRKEPGGGKKKPKYSYKTVEELKAKGRVGKSLSAPQKEISQVKVIDMTGREQKVYYSYSQLAQKHNIPGEAPGQGVKEEKPQGFALPELEHNLQLLIDMTEQEIIQNDRQLQYEQDMVVNLTHELEKLSEVLEREDKAIENLSKVLETVEECERRIQPTCDNPLTLEECARIFEMLQDKYYEEYKMSEKADLSVAIVYPLMKDYFKDWNPLRDPNYGTDVMSKWKNLLEEGHLSHSAHDAAMDPYHRLLWEMWVPFLRNIIAQWQPRNCAPMADFLDSWVHLLPVWILDNILDQLIFPKLQKEVENWNPLTDTVPIHSWIHPWLPMMQSRLEPLFSPIRNKLSNALQKWHPSDSSAKLILQPWKEVFTPGSWEAFMVKNIVPKLGMCLSEFVINPHQQHMEVFHWVTDWEGMVALSSIVGLLEKHFFPKWLQVLCSWLSNNPNYEEITKWYLGWKSMFSDLVLAHPAIKDKFNEALDIMNRAVSSSVGAYMQPGARESIAYLTQTEKRKDFQYEAMQERRDAESIAQRGIGAAAAVPMNFKDLIQSKAEEHNIVFMPLIGKRHEGKQLYNFNRIVIYIDRGVVFVQGEKTWVPTSLQSLIDMAK</sequence>
<reference key="1">
    <citation type="journal article" date="2007" name="Exp. Cell Res.">
        <title>Characterization of STIP, a multi-domain nuclear protein, highly conserved in metazoans, and essential for embryogenesis in Caenorhabditis elegans.</title>
        <authorList>
            <person name="Ji Q."/>
            <person name="Huang C.-H."/>
            <person name="Peng J."/>
            <person name="Hashmi S."/>
            <person name="Ye T."/>
            <person name="Chen Y."/>
        </authorList>
    </citation>
    <scope>NUCLEOTIDE SEQUENCE [MRNA]</scope>
</reference>
<reference key="2">
    <citation type="submission" date="2004-08" db="EMBL/GenBank/DDBJ databases">
        <authorList>
            <consortium name="NIH - Xenopus Gene Collection (XGC) project"/>
        </authorList>
    </citation>
    <scope>NUCLEOTIDE SEQUENCE [LARGE SCALE MRNA]</scope>
    <source>
        <tissue>Embryo</tissue>
    </source>
</reference>
<name>TFP11_XENLA</name>
<evidence type="ECO:0000250" key="1"/>
<evidence type="ECO:0000255" key="2">
    <source>
        <dbReference type="PROSITE-ProRule" id="PRU00092"/>
    </source>
</evidence>
<evidence type="ECO:0000256" key="3">
    <source>
        <dbReference type="SAM" id="MobiDB-lite"/>
    </source>
</evidence>
<evidence type="ECO:0000305" key="4"/>
<protein>
    <recommendedName>
        <fullName>Tuftelin-interacting protein 11</fullName>
    </recommendedName>
    <alternativeName>
        <fullName>Septin and tuftelin-interacting protein 1</fullName>
        <shortName>STIP-1</shortName>
    </alternativeName>
</protein>
<proteinExistence type="evidence at transcript level"/>
<feature type="chain" id="PRO_0000342281" description="Tuftelin-interacting protein 11">
    <location>
        <begin position="1"/>
        <end position="824"/>
    </location>
</feature>
<feature type="domain" description="G-patch" evidence="2">
    <location>
        <begin position="145"/>
        <end position="191"/>
    </location>
</feature>
<feature type="region of interest" description="Disordered" evidence="3">
    <location>
        <begin position="1"/>
        <end position="135"/>
    </location>
</feature>
<feature type="compositionally biased region" description="Acidic residues" evidence="3">
    <location>
        <begin position="11"/>
        <end position="25"/>
    </location>
</feature>
<feature type="compositionally biased region" description="Basic and acidic residues" evidence="3">
    <location>
        <begin position="41"/>
        <end position="61"/>
    </location>
</feature>
<feature type="compositionally biased region" description="Basic and acidic residues" evidence="3">
    <location>
        <begin position="85"/>
        <end position="114"/>
    </location>
</feature>
<feature type="compositionally biased region" description="Polar residues" evidence="3">
    <location>
        <begin position="122"/>
        <end position="135"/>
    </location>
</feature>
<comment type="function">
    <text evidence="1">Involved in pre-mRNA splicing, specifically in spliceosome disassembly during late-stage splicing events.</text>
</comment>
<comment type="subunit">
    <text evidence="1">Identified in the spliceosome C complex.</text>
</comment>
<comment type="subcellular location">
    <subcellularLocation>
        <location evidence="1">Nucleus</location>
    </subcellularLocation>
</comment>
<comment type="similarity">
    <text evidence="4">Belongs to the TFP11/STIP family.</text>
</comment>
<organism>
    <name type="scientific">Xenopus laevis</name>
    <name type="common">African clawed frog</name>
    <dbReference type="NCBI Taxonomy" id="8355"/>
    <lineage>
        <taxon>Eukaryota</taxon>
        <taxon>Metazoa</taxon>
        <taxon>Chordata</taxon>
        <taxon>Craniata</taxon>
        <taxon>Vertebrata</taxon>
        <taxon>Euteleostomi</taxon>
        <taxon>Amphibia</taxon>
        <taxon>Batrachia</taxon>
        <taxon>Anura</taxon>
        <taxon>Pipoidea</taxon>
        <taxon>Pipidae</taxon>
        <taxon>Xenopodinae</taxon>
        <taxon>Xenopus</taxon>
        <taxon>Xenopus</taxon>
    </lineage>
</organism>
<keyword id="KW-0507">mRNA processing</keyword>
<keyword id="KW-0508">mRNA splicing</keyword>
<keyword id="KW-0539">Nucleus</keyword>
<keyword id="KW-1185">Reference proteome</keyword>
<keyword id="KW-0747">Spliceosome</keyword>
<gene>
    <name type="primary">tfip11</name>
    <name type="synonym">stip</name>
</gene>
<dbReference type="EMBL" id="DQ342033">
    <property type="protein sequence ID" value="ABC69925.1"/>
    <property type="molecule type" value="mRNA"/>
</dbReference>
<dbReference type="EMBL" id="BC081033">
    <property type="protein sequence ID" value="AAH81033.1"/>
    <property type="molecule type" value="mRNA"/>
</dbReference>
<dbReference type="RefSeq" id="NP_001087642.1">
    <property type="nucleotide sequence ID" value="NM_001094173.1"/>
</dbReference>
<dbReference type="SMR" id="Q66J74"/>
<dbReference type="DNASU" id="447466"/>
<dbReference type="GeneID" id="447466"/>
<dbReference type="KEGG" id="xla:447466"/>
<dbReference type="AGR" id="Xenbase:XB-GENE-984527"/>
<dbReference type="CTD" id="447466"/>
<dbReference type="Xenbase" id="XB-GENE-984527">
    <property type="gene designation" value="tfip11.L"/>
</dbReference>
<dbReference type="OrthoDB" id="4822at2759"/>
<dbReference type="Proteomes" id="UP000186698">
    <property type="component" value="Chromosome 4L"/>
</dbReference>
<dbReference type="Bgee" id="447466">
    <property type="expression patterns" value="Expressed in oocyte and 19 other cell types or tissues"/>
</dbReference>
<dbReference type="GO" id="GO:0005681">
    <property type="term" value="C:spliceosomal complex"/>
    <property type="evidence" value="ECO:0000250"/>
    <property type="project" value="UniProtKB"/>
</dbReference>
<dbReference type="GO" id="GO:0071008">
    <property type="term" value="C:U2-type post-mRNA release spliceosomal complex"/>
    <property type="evidence" value="ECO:0000318"/>
    <property type="project" value="GO_Central"/>
</dbReference>
<dbReference type="GO" id="GO:0003676">
    <property type="term" value="F:nucleic acid binding"/>
    <property type="evidence" value="ECO:0007669"/>
    <property type="project" value="InterPro"/>
</dbReference>
<dbReference type="GO" id="GO:0000390">
    <property type="term" value="P:spliceosomal complex disassembly"/>
    <property type="evidence" value="ECO:0000318"/>
    <property type="project" value="GO_Central"/>
</dbReference>
<dbReference type="InterPro" id="IPR000467">
    <property type="entry name" value="G_patch_dom"/>
</dbReference>
<dbReference type="InterPro" id="IPR022783">
    <property type="entry name" value="GCFC_dom"/>
</dbReference>
<dbReference type="InterPro" id="IPR022159">
    <property type="entry name" value="STIP/TFIP11_N"/>
</dbReference>
<dbReference type="InterPro" id="IPR024933">
    <property type="entry name" value="TFP11"/>
</dbReference>
<dbReference type="InterPro" id="IPR045211">
    <property type="entry name" value="TFP11/STIP/Ntr1"/>
</dbReference>
<dbReference type="PANTHER" id="PTHR23329:SF1">
    <property type="entry name" value="TUFTELIN-INTERACTING PROTEIN 11"/>
    <property type="match status" value="1"/>
</dbReference>
<dbReference type="PANTHER" id="PTHR23329">
    <property type="entry name" value="TUFTELIN-INTERACTING PROTEIN 11-RELATED"/>
    <property type="match status" value="1"/>
</dbReference>
<dbReference type="Pfam" id="PF01585">
    <property type="entry name" value="G-patch"/>
    <property type="match status" value="1"/>
</dbReference>
<dbReference type="Pfam" id="PF07842">
    <property type="entry name" value="GCFC"/>
    <property type="match status" value="1"/>
</dbReference>
<dbReference type="Pfam" id="PF12457">
    <property type="entry name" value="TIP_N"/>
    <property type="match status" value="1"/>
</dbReference>
<dbReference type="PIRSF" id="PIRSF017706">
    <property type="entry name" value="TFIP11"/>
    <property type="match status" value="1"/>
</dbReference>
<dbReference type="SMART" id="SM00443">
    <property type="entry name" value="G_patch"/>
    <property type="match status" value="1"/>
</dbReference>
<dbReference type="PROSITE" id="PS50174">
    <property type="entry name" value="G_PATCH"/>
    <property type="match status" value="1"/>
</dbReference>
<accession>Q66J74</accession>